<dbReference type="EMBL" id="AE009950">
    <property type="protein sequence ID" value="AAL80501.1"/>
    <property type="molecule type" value="Genomic_DNA"/>
</dbReference>
<dbReference type="RefSeq" id="WP_011011491.1">
    <property type="nucleotide sequence ID" value="NZ_CP023154.1"/>
</dbReference>
<dbReference type="SMR" id="Q8U3S8"/>
<dbReference type="STRING" id="186497.PF0377"/>
<dbReference type="PaxDb" id="186497-PF0377"/>
<dbReference type="KEGG" id="pfu:PF0377"/>
<dbReference type="PATRIC" id="fig|186497.12.peg.392"/>
<dbReference type="eggNOG" id="arCOG04176">
    <property type="taxonomic scope" value="Archaea"/>
</dbReference>
<dbReference type="HOGENOM" id="CLU_071894_1_0_2"/>
<dbReference type="OrthoDB" id="33582at2157"/>
<dbReference type="PhylomeDB" id="Q8U3S8"/>
<dbReference type="Proteomes" id="UP000001013">
    <property type="component" value="Chromosome"/>
</dbReference>
<dbReference type="GO" id="GO:0043022">
    <property type="term" value="F:ribosome binding"/>
    <property type="evidence" value="ECO:0007669"/>
    <property type="project" value="InterPro"/>
</dbReference>
<dbReference type="GO" id="GO:0003743">
    <property type="term" value="F:translation initiation factor activity"/>
    <property type="evidence" value="ECO:0007669"/>
    <property type="project" value="UniProtKB-UniRule"/>
</dbReference>
<dbReference type="GO" id="GO:0042256">
    <property type="term" value="P:cytosolic ribosome assembly"/>
    <property type="evidence" value="ECO:0007669"/>
    <property type="project" value="InterPro"/>
</dbReference>
<dbReference type="CDD" id="cd00527">
    <property type="entry name" value="IF6"/>
    <property type="match status" value="1"/>
</dbReference>
<dbReference type="Gene3D" id="3.75.10.10">
    <property type="entry name" value="L-arginine/glycine Amidinotransferase, Chain A"/>
    <property type="match status" value="1"/>
</dbReference>
<dbReference type="HAMAP" id="MF_00032">
    <property type="entry name" value="eIF_6"/>
    <property type="match status" value="1"/>
</dbReference>
<dbReference type="InterPro" id="IPR002769">
    <property type="entry name" value="eIF6"/>
</dbReference>
<dbReference type="NCBIfam" id="TIGR00323">
    <property type="entry name" value="eIF-6"/>
    <property type="match status" value="1"/>
</dbReference>
<dbReference type="NCBIfam" id="NF003129">
    <property type="entry name" value="PRK04046.1-5"/>
    <property type="match status" value="1"/>
</dbReference>
<dbReference type="PANTHER" id="PTHR10784">
    <property type="entry name" value="TRANSLATION INITIATION FACTOR 6"/>
    <property type="match status" value="1"/>
</dbReference>
<dbReference type="Pfam" id="PF01912">
    <property type="entry name" value="eIF-6"/>
    <property type="match status" value="1"/>
</dbReference>
<dbReference type="PIRSF" id="PIRSF006413">
    <property type="entry name" value="IF-6"/>
    <property type="match status" value="1"/>
</dbReference>
<dbReference type="SMART" id="SM00654">
    <property type="entry name" value="eIF6"/>
    <property type="match status" value="1"/>
</dbReference>
<dbReference type="SUPFAM" id="SSF55909">
    <property type="entry name" value="Pentein"/>
    <property type="match status" value="1"/>
</dbReference>
<accession>Q8U3S8</accession>
<gene>
    <name evidence="1" type="primary">eif6</name>
    <name type="ordered locus">PF0377</name>
</gene>
<organism>
    <name type="scientific">Pyrococcus furiosus (strain ATCC 43587 / DSM 3638 / JCM 8422 / Vc1)</name>
    <dbReference type="NCBI Taxonomy" id="186497"/>
    <lineage>
        <taxon>Archaea</taxon>
        <taxon>Methanobacteriati</taxon>
        <taxon>Methanobacteriota</taxon>
        <taxon>Thermococci</taxon>
        <taxon>Thermococcales</taxon>
        <taxon>Thermococcaceae</taxon>
        <taxon>Pyrococcus</taxon>
    </lineage>
</organism>
<comment type="function">
    <text evidence="1">Binds to the 50S ribosomal subunit and prevents its association with the 30S ribosomal subunit to form the 70S initiation complex.</text>
</comment>
<comment type="similarity">
    <text evidence="1">Belongs to the eIF-6 family.</text>
</comment>
<protein>
    <recommendedName>
        <fullName evidence="1">Translation initiation factor 6</fullName>
        <shortName evidence="1">aIF-6</shortName>
    </recommendedName>
</protein>
<feature type="chain" id="PRO_0000153755" description="Translation initiation factor 6">
    <location>
        <begin position="1"/>
        <end position="227"/>
    </location>
</feature>
<name>IF6_PYRFU</name>
<evidence type="ECO:0000255" key="1">
    <source>
        <dbReference type="HAMAP-Rule" id="MF_00032"/>
    </source>
</evidence>
<keyword id="KW-0396">Initiation factor</keyword>
<keyword id="KW-0648">Protein biosynthesis</keyword>
<keyword id="KW-1185">Reference proteome</keyword>
<sequence>MHIEKLDFENSPYLGVFGIATDKVVLIREGLQEKKLEVIREVLKVPVVEASLMKSRIIGVLGAGNSNAIIVPWYVWDSELEKIKNAFREYGIDTEVVPFQTKYTALGNLILTNDKGALVSSKFSREEAKKIGDILGVEVERGVIAGIVAVGSAGVVTNKGGLVHPEATDEELEWLSDLFKVDVYVGTANMGVPYVGSCMLANSYGVVVGHLTTGPEIVKIEEALGFI</sequence>
<proteinExistence type="inferred from homology"/>
<reference key="1">
    <citation type="journal article" date="1999" name="Genetics">
        <title>Divergence of the hyperthermophilic archaea Pyrococcus furiosus and P. horikoshii inferred from complete genomic sequences.</title>
        <authorList>
            <person name="Maeder D.L."/>
            <person name="Weiss R.B."/>
            <person name="Dunn D.M."/>
            <person name="Cherry J.L."/>
            <person name="Gonzalez J.M."/>
            <person name="DiRuggiero J."/>
            <person name="Robb F.T."/>
        </authorList>
    </citation>
    <scope>NUCLEOTIDE SEQUENCE [LARGE SCALE GENOMIC DNA]</scope>
    <source>
        <strain>ATCC 43587 / DSM 3638 / JCM 8422 / Vc1</strain>
    </source>
</reference>